<comment type="function">
    <text evidence="1">Is able to cleave peptidoglycan and affects clumping and separation of bacterial cells.</text>
</comment>
<comment type="subcellular location">
    <subcellularLocation>
        <location evidence="1">Secreted</location>
    </subcellularLocation>
</comment>
<comment type="induction">
    <text evidence="1">Positively regulated by sigma B factor.</text>
</comment>
<comment type="similarity">
    <text evidence="4">Belongs to the transglycosylase family. SceD subfamily.</text>
</comment>
<accession>A6QIT9</accession>
<reference key="1">
    <citation type="journal article" date="2008" name="J. Bacteriol.">
        <title>Genome sequence of Staphylococcus aureus strain Newman and comparative analysis of staphylococcal genomes: polymorphism and evolution of two major pathogenicity islands.</title>
        <authorList>
            <person name="Baba T."/>
            <person name="Bae T."/>
            <person name="Schneewind O."/>
            <person name="Takeuchi F."/>
            <person name="Hiramatsu K."/>
        </authorList>
    </citation>
    <scope>NUCLEOTIDE SEQUENCE [LARGE SCALE GENOMIC DNA]</scope>
    <source>
        <strain>Newman</strain>
    </source>
</reference>
<dbReference type="EC" id="3.2.-.-"/>
<dbReference type="EMBL" id="AP009351">
    <property type="protein sequence ID" value="BAF68271.1"/>
    <property type="molecule type" value="Genomic_DNA"/>
</dbReference>
<dbReference type="RefSeq" id="WP_000752008.1">
    <property type="nucleotide sequence ID" value="NZ_JBBIAE010000008.1"/>
</dbReference>
<dbReference type="SMR" id="A6QIT9"/>
<dbReference type="KEGG" id="sae:NWMN_1999"/>
<dbReference type="HOGENOM" id="CLU_099865_0_0_9"/>
<dbReference type="Proteomes" id="UP000006386">
    <property type="component" value="Chromosome"/>
</dbReference>
<dbReference type="GO" id="GO:0005576">
    <property type="term" value="C:extracellular region"/>
    <property type="evidence" value="ECO:0007669"/>
    <property type="project" value="UniProtKB-SubCell"/>
</dbReference>
<dbReference type="GO" id="GO:0016798">
    <property type="term" value="F:hydrolase activity, acting on glycosyl bonds"/>
    <property type="evidence" value="ECO:0007669"/>
    <property type="project" value="UniProtKB-KW"/>
</dbReference>
<dbReference type="CDD" id="cd13925">
    <property type="entry name" value="RPF"/>
    <property type="match status" value="1"/>
</dbReference>
<dbReference type="Gene3D" id="1.10.530.10">
    <property type="match status" value="1"/>
</dbReference>
<dbReference type="InterPro" id="IPR023346">
    <property type="entry name" value="Lysozyme-like_dom_sf"/>
</dbReference>
<dbReference type="InterPro" id="IPR010618">
    <property type="entry name" value="RPF"/>
</dbReference>
<dbReference type="Pfam" id="PF06737">
    <property type="entry name" value="Transglycosylas"/>
    <property type="match status" value="1"/>
</dbReference>
<dbReference type="SUPFAM" id="SSF53955">
    <property type="entry name" value="Lysozyme-like"/>
    <property type="match status" value="1"/>
</dbReference>
<gene>
    <name type="primary">sceD</name>
    <name type="ordered locus">NWMN_1999</name>
</gene>
<proteinExistence type="inferred from homology"/>
<organism>
    <name type="scientific">Staphylococcus aureus (strain Newman)</name>
    <dbReference type="NCBI Taxonomy" id="426430"/>
    <lineage>
        <taxon>Bacteria</taxon>
        <taxon>Bacillati</taxon>
        <taxon>Bacillota</taxon>
        <taxon>Bacilli</taxon>
        <taxon>Bacillales</taxon>
        <taxon>Staphylococcaceae</taxon>
        <taxon>Staphylococcus</taxon>
    </lineage>
</organism>
<feature type="signal peptide" evidence="2">
    <location>
        <begin position="1"/>
        <end position="27"/>
    </location>
</feature>
<feature type="chain" id="PRO_0000320312" description="Probable transglycosylase SceD">
    <location>
        <begin position="28"/>
        <end position="231"/>
    </location>
</feature>
<feature type="region of interest" description="Disordered" evidence="3">
    <location>
        <begin position="106"/>
        <end position="153"/>
    </location>
</feature>
<feature type="compositionally biased region" description="Polar residues" evidence="3">
    <location>
        <begin position="106"/>
        <end position="116"/>
    </location>
</feature>
<feature type="compositionally biased region" description="Low complexity" evidence="3">
    <location>
        <begin position="119"/>
        <end position="137"/>
    </location>
</feature>
<feature type="compositionally biased region" description="Polar residues" evidence="3">
    <location>
        <begin position="138"/>
        <end position="153"/>
    </location>
</feature>
<protein>
    <recommendedName>
        <fullName>Probable transglycosylase SceD</fullName>
        <ecNumber>3.2.-.-</ecNumber>
    </recommendedName>
</protein>
<evidence type="ECO:0000250" key="1"/>
<evidence type="ECO:0000255" key="2"/>
<evidence type="ECO:0000256" key="3">
    <source>
        <dbReference type="SAM" id="MobiDB-lite"/>
    </source>
</evidence>
<evidence type="ECO:0000305" key="4"/>
<name>SCED_STAAE</name>
<keyword id="KW-0326">Glycosidase</keyword>
<keyword id="KW-0378">Hydrolase</keyword>
<keyword id="KW-0964">Secreted</keyword>
<keyword id="KW-0732">Signal</keyword>
<sequence>MKKTLLASSLAVGLGIVAGNAGHEAHASEADLNKASLAQMAQSNDQTLNQKPIEAGAYNYTFDYEGFTYHFESDGTHFAWNYHATGTNGADMSAQAPATNNVAPSAVQANQVQSQEVEAPQNAQTQQPQASTSNNSQVTATPTESKSSEGSSVNVNAHLKQIAQRESGGNIHAVNPTSGAAGKYQFLQSTWDSVAPAKYKGVSPANAPESVQDAAAVKLYNTGGAGHWVTA</sequence>